<reference key="1">
    <citation type="journal article" date="2014" name="Stand. Genomic Sci.">
        <title>Complete genome sequence of Burkholderia phymatum STM815(T), a broad host range and efficient nitrogen-fixing symbiont of Mimosa species.</title>
        <authorList>
            <person name="Moulin L."/>
            <person name="Klonowska A."/>
            <person name="Caroline B."/>
            <person name="Booth K."/>
            <person name="Vriezen J.A."/>
            <person name="Melkonian R."/>
            <person name="James E.K."/>
            <person name="Young J.P."/>
            <person name="Bena G."/>
            <person name="Hauser L."/>
            <person name="Land M."/>
            <person name="Kyrpides N."/>
            <person name="Bruce D."/>
            <person name="Chain P."/>
            <person name="Copeland A."/>
            <person name="Pitluck S."/>
            <person name="Woyke T."/>
            <person name="Lizotte-Waniewski M."/>
            <person name="Bristow J."/>
            <person name="Riley M."/>
        </authorList>
    </citation>
    <scope>NUCLEOTIDE SEQUENCE [LARGE SCALE GENOMIC DNA]</scope>
    <source>
        <strain>DSM 17167 / CIP 108236 / LMG 21445 / STM815</strain>
    </source>
</reference>
<feature type="chain" id="PRO_1000115429" description="Homoserine kinase">
    <location>
        <begin position="1"/>
        <end position="323"/>
    </location>
</feature>
<organism>
    <name type="scientific">Paraburkholderia phymatum (strain DSM 17167 / CIP 108236 / LMG 21445 / STM815)</name>
    <name type="common">Burkholderia phymatum</name>
    <dbReference type="NCBI Taxonomy" id="391038"/>
    <lineage>
        <taxon>Bacteria</taxon>
        <taxon>Pseudomonadati</taxon>
        <taxon>Pseudomonadota</taxon>
        <taxon>Betaproteobacteria</taxon>
        <taxon>Burkholderiales</taxon>
        <taxon>Burkholderiaceae</taxon>
        <taxon>Paraburkholderia</taxon>
    </lineage>
</organism>
<gene>
    <name evidence="1" type="primary">thrB</name>
    <name type="ordered locus">Bphy_4412</name>
</gene>
<keyword id="KW-0028">Amino-acid biosynthesis</keyword>
<keyword id="KW-0067">ATP-binding</keyword>
<keyword id="KW-0418">Kinase</keyword>
<keyword id="KW-0547">Nucleotide-binding</keyword>
<keyword id="KW-1185">Reference proteome</keyword>
<keyword id="KW-0791">Threonine biosynthesis</keyword>
<keyword id="KW-0808">Transferase</keyword>
<protein>
    <recommendedName>
        <fullName evidence="1">Homoserine kinase</fullName>
        <shortName evidence="1">HK</shortName>
        <shortName evidence="1">HSK</shortName>
        <ecNumber evidence="1">2.7.1.39</ecNumber>
    </recommendedName>
</protein>
<proteinExistence type="inferred from homology"/>
<comment type="catalytic activity">
    <reaction evidence="1">
        <text>L-homoserine + ATP = O-phospho-L-homoserine + ADP + H(+)</text>
        <dbReference type="Rhea" id="RHEA:13985"/>
        <dbReference type="ChEBI" id="CHEBI:15378"/>
        <dbReference type="ChEBI" id="CHEBI:30616"/>
        <dbReference type="ChEBI" id="CHEBI:57476"/>
        <dbReference type="ChEBI" id="CHEBI:57590"/>
        <dbReference type="ChEBI" id="CHEBI:456216"/>
        <dbReference type="EC" id="2.7.1.39"/>
    </reaction>
</comment>
<comment type="pathway">
    <text evidence="1">Amino-acid biosynthesis; L-threonine biosynthesis; L-threonine from L-aspartate: step 4/5.</text>
</comment>
<comment type="similarity">
    <text evidence="1">Belongs to the pseudomonas-type ThrB family.</text>
</comment>
<dbReference type="EC" id="2.7.1.39" evidence="1"/>
<dbReference type="EMBL" id="CP001044">
    <property type="protein sequence ID" value="ACC73526.1"/>
    <property type="molecule type" value="Genomic_DNA"/>
</dbReference>
<dbReference type="RefSeq" id="WP_012403699.1">
    <property type="nucleotide sequence ID" value="NC_010623.1"/>
</dbReference>
<dbReference type="SMR" id="B2JQI5"/>
<dbReference type="STRING" id="391038.Bphy_4412"/>
<dbReference type="KEGG" id="bph:Bphy_4412"/>
<dbReference type="eggNOG" id="COG2334">
    <property type="taxonomic scope" value="Bacteria"/>
</dbReference>
<dbReference type="HOGENOM" id="CLU_053300_0_0_4"/>
<dbReference type="OrthoDB" id="9777460at2"/>
<dbReference type="UniPathway" id="UPA00050">
    <property type="reaction ID" value="UER00064"/>
</dbReference>
<dbReference type="Proteomes" id="UP000001192">
    <property type="component" value="Chromosome 2"/>
</dbReference>
<dbReference type="GO" id="GO:0005524">
    <property type="term" value="F:ATP binding"/>
    <property type="evidence" value="ECO:0007669"/>
    <property type="project" value="UniProtKB-KW"/>
</dbReference>
<dbReference type="GO" id="GO:0004413">
    <property type="term" value="F:homoserine kinase activity"/>
    <property type="evidence" value="ECO:0007669"/>
    <property type="project" value="UniProtKB-UniRule"/>
</dbReference>
<dbReference type="GO" id="GO:0009088">
    <property type="term" value="P:threonine biosynthetic process"/>
    <property type="evidence" value="ECO:0007669"/>
    <property type="project" value="UniProtKB-UniRule"/>
</dbReference>
<dbReference type="CDD" id="cd05153">
    <property type="entry name" value="HomoserineK_II"/>
    <property type="match status" value="1"/>
</dbReference>
<dbReference type="Gene3D" id="3.90.1200.10">
    <property type="match status" value="1"/>
</dbReference>
<dbReference type="Gene3D" id="3.30.200.20">
    <property type="entry name" value="Phosphorylase Kinase, domain 1"/>
    <property type="match status" value="1"/>
</dbReference>
<dbReference type="HAMAP" id="MF_00301">
    <property type="entry name" value="Homoser_kinase_2"/>
    <property type="match status" value="1"/>
</dbReference>
<dbReference type="InterPro" id="IPR002575">
    <property type="entry name" value="Aminoglycoside_PTrfase"/>
</dbReference>
<dbReference type="InterPro" id="IPR005280">
    <property type="entry name" value="Homoserine_kinase_II"/>
</dbReference>
<dbReference type="InterPro" id="IPR011009">
    <property type="entry name" value="Kinase-like_dom_sf"/>
</dbReference>
<dbReference type="InterPro" id="IPR050249">
    <property type="entry name" value="Pseudomonas-type_ThrB"/>
</dbReference>
<dbReference type="NCBIfam" id="NF003558">
    <property type="entry name" value="PRK05231.1"/>
    <property type="match status" value="1"/>
</dbReference>
<dbReference type="NCBIfam" id="TIGR00938">
    <property type="entry name" value="thrB_alt"/>
    <property type="match status" value="1"/>
</dbReference>
<dbReference type="PANTHER" id="PTHR21064:SF6">
    <property type="entry name" value="AMINOGLYCOSIDE PHOSPHOTRANSFERASE DOMAIN-CONTAINING PROTEIN"/>
    <property type="match status" value="1"/>
</dbReference>
<dbReference type="PANTHER" id="PTHR21064">
    <property type="entry name" value="AMINOGLYCOSIDE PHOSPHOTRANSFERASE DOMAIN-CONTAINING PROTEIN-RELATED"/>
    <property type="match status" value="1"/>
</dbReference>
<dbReference type="Pfam" id="PF01636">
    <property type="entry name" value="APH"/>
    <property type="match status" value="1"/>
</dbReference>
<dbReference type="SUPFAM" id="SSF56112">
    <property type="entry name" value="Protein kinase-like (PK-like)"/>
    <property type="match status" value="1"/>
</dbReference>
<evidence type="ECO:0000255" key="1">
    <source>
        <dbReference type="HAMAP-Rule" id="MF_00301"/>
    </source>
</evidence>
<sequence length="323" mass="36317">MAVFTAVTEAQLADWMRHYDLGEVVEFRGITSGIENSNFFLTTTRGEYVLTIFEKLTAQQLPFYLDLMRHLASHRVPVPDPMPRDDGALFGMLNGKPATIVTKLDGAPELAPGAAHCVEVGQMLARLHLAGRDFAHHQPNLRSLPWWQETVPSIAPFLSDARRTLLTEELAHQQAFFASADYASLPGGPCHCDLFRDNVLFAHAAPGTHHEVELGGFFDFYFAGCDKWLFDVAVTVNDWCVDLATGKLDEARVEAMLRAYQTVRPFTPAEARHWGDMLRAGAYRFWVSRLYDFHMPRAAELLKPHDPGHFERILRERLAGAAL</sequence>
<name>KHSE_PARP8</name>
<accession>B2JQI5</accession>